<protein>
    <recommendedName>
        <fullName>Uncharacterized protein YdfV</fullName>
    </recommendedName>
</protein>
<accession>P76163</accession>
<accession>Q2MB85</accession>
<organism>
    <name type="scientific">Escherichia coli (strain K12)</name>
    <dbReference type="NCBI Taxonomy" id="83333"/>
    <lineage>
        <taxon>Bacteria</taxon>
        <taxon>Pseudomonadati</taxon>
        <taxon>Pseudomonadota</taxon>
        <taxon>Gammaproteobacteria</taxon>
        <taxon>Enterobacterales</taxon>
        <taxon>Enterobacteriaceae</taxon>
        <taxon>Escherichia</taxon>
    </lineage>
</organism>
<gene>
    <name type="primary">ydfV</name>
    <name type="ordered locus">b1565</name>
    <name type="ordered locus">JW1557</name>
</gene>
<feature type="chain" id="PRO_0000168960" description="Uncharacterized protein YdfV">
    <location>
        <begin position="1"/>
        <end position="101"/>
    </location>
</feature>
<name>YDFV_ECOLI</name>
<reference key="1">
    <citation type="journal article" date="1997" name="Science">
        <title>The complete genome sequence of Escherichia coli K-12.</title>
        <authorList>
            <person name="Blattner F.R."/>
            <person name="Plunkett G. III"/>
            <person name="Bloch C.A."/>
            <person name="Perna N.T."/>
            <person name="Burland V."/>
            <person name="Riley M."/>
            <person name="Collado-Vides J."/>
            <person name="Glasner J.D."/>
            <person name="Rode C.K."/>
            <person name="Mayhew G.F."/>
            <person name="Gregor J."/>
            <person name="Davis N.W."/>
            <person name="Kirkpatrick H.A."/>
            <person name="Goeden M.A."/>
            <person name="Rose D.J."/>
            <person name="Mau B."/>
            <person name="Shao Y."/>
        </authorList>
    </citation>
    <scope>NUCLEOTIDE SEQUENCE [LARGE SCALE GENOMIC DNA]</scope>
    <source>
        <strain>K12 / MG1655 / ATCC 47076</strain>
    </source>
</reference>
<reference key="2">
    <citation type="journal article" date="2006" name="Mol. Syst. Biol.">
        <title>Highly accurate genome sequences of Escherichia coli K-12 strains MG1655 and W3110.</title>
        <authorList>
            <person name="Hayashi K."/>
            <person name="Morooka N."/>
            <person name="Yamamoto Y."/>
            <person name="Fujita K."/>
            <person name="Isono K."/>
            <person name="Choi S."/>
            <person name="Ohtsubo E."/>
            <person name="Baba T."/>
            <person name="Wanner B.L."/>
            <person name="Mori H."/>
            <person name="Horiuchi T."/>
        </authorList>
    </citation>
    <scope>NUCLEOTIDE SEQUENCE [LARGE SCALE GENOMIC DNA]</scope>
    <source>
        <strain>K12 / W3110 / ATCC 27325 / DSM 5911</strain>
    </source>
</reference>
<dbReference type="EMBL" id="U00096">
    <property type="protein sequence ID" value="AAC74638.1"/>
    <property type="molecule type" value="Genomic_DNA"/>
</dbReference>
<dbReference type="EMBL" id="AP009048">
    <property type="protein sequence ID" value="BAE76471.1"/>
    <property type="molecule type" value="Genomic_DNA"/>
</dbReference>
<dbReference type="PIR" id="H64911">
    <property type="entry name" value="H64911"/>
</dbReference>
<dbReference type="RefSeq" id="NP_416083.1">
    <property type="nucleotide sequence ID" value="NC_000913.3"/>
</dbReference>
<dbReference type="RefSeq" id="WP_001326990.1">
    <property type="nucleotide sequence ID" value="NZ_SSUV01000001.1"/>
</dbReference>
<dbReference type="BioGRID" id="4260916">
    <property type="interactions" value="7"/>
</dbReference>
<dbReference type="FunCoup" id="P76163">
    <property type="interactions" value="9"/>
</dbReference>
<dbReference type="IntAct" id="P76163">
    <property type="interactions" value="1"/>
</dbReference>
<dbReference type="STRING" id="511145.b1565"/>
<dbReference type="PaxDb" id="511145-b1565"/>
<dbReference type="EnsemblBacteria" id="AAC74638">
    <property type="protein sequence ID" value="AAC74638"/>
    <property type="gene ID" value="b1565"/>
</dbReference>
<dbReference type="GeneID" id="948801"/>
<dbReference type="KEGG" id="ecj:JW1557"/>
<dbReference type="KEGG" id="eco:b1565"/>
<dbReference type="PATRIC" id="fig|83333.113.peg.1607"/>
<dbReference type="EchoBASE" id="EB3595"/>
<dbReference type="HOGENOM" id="CLU_2408583_0_0_6"/>
<dbReference type="InParanoid" id="P76163"/>
<dbReference type="OMA" id="YCAGQLF"/>
<dbReference type="OrthoDB" id="6629871at2"/>
<dbReference type="BioCyc" id="EcoCyc:G6832-MONOMER"/>
<dbReference type="PRO" id="PR:P76163"/>
<dbReference type="Proteomes" id="UP000000625">
    <property type="component" value="Chromosome"/>
</dbReference>
<proteinExistence type="predicted"/>
<sequence>MSLQVSHYNMLRASHEGSQKVVVRTVITVRFVPGAAIAKSILYCAGQLVFKESGHHLTGTDTIYFVTVRLHMHNSTYSSIFCFSMSVLLSRRRVSGDLTCR</sequence>
<keyword id="KW-1185">Reference proteome</keyword>